<protein>
    <recommendedName>
        <fullName>ATP synthase subunit a-2</fullName>
    </recommendedName>
    <alternativeName>
        <fullName>F-ATPase protein 6</fullName>
    </alternativeName>
    <alternativeName>
        <fullName>P6-2</fullName>
    </alternativeName>
</protein>
<keyword id="KW-0066">ATP synthesis</keyword>
<keyword id="KW-0138">CF(0)</keyword>
<keyword id="KW-0375">Hydrogen ion transport</keyword>
<keyword id="KW-0406">Ion transport</keyword>
<keyword id="KW-0472">Membrane</keyword>
<keyword id="KW-0496">Mitochondrion</keyword>
<keyword id="KW-0999">Mitochondrion inner membrane</keyword>
<keyword id="KW-1185">Reference proteome</keyword>
<keyword id="KW-0691">RNA editing</keyword>
<keyword id="KW-0812">Transmembrane</keyword>
<keyword id="KW-1133">Transmembrane helix</keyword>
<keyword id="KW-0813">Transport</keyword>
<evidence type="ECO:0000250" key="1"/>
<evidence type="ECO:0000255" key="2"/>
<evidence type="ECO:0000269" key="3">
    <source>
    </source>
</evidence>
<evidence type="ECO:0000269" key="4">
    <source>
    </source>
</evidence>
<evidence type="ECO:0000269" key="5">
    <source>
    </source>
</evidence>
<evidence type="ECO:0000305" key="6"/>
<comment type="function">
    <text evidence="1">Mitochondrial membrane ATP synthase (F(1)F(0) ATP synthase or Complex V) produces ATP from ADP in the presence of a proton gradient across the membrane which is generated by electron transport complexes of the respiratory chain. F-type ATPases consist of two structural domains, F(1) - containing the extramembraneous catalytic core and F(0) - containing the membrane proton channel, linked together by a central stalk and a peripheral stalk. During catalysis, ATP synthesis in the catalytic domain of F(1) is coupled via a rotary mechanism of the central stalk subunits to proton translocation. Key component of the proton channel; it may play a direct role in the translocation of protons across the membrane (By similarity).</text>
</comment>
<comment type="subunit">
    <text>F-type ATPases have 2 components, CF(1) - the catalytic core - and CF(0) - the membrane proton channel. CF(1) has five subunits: alpha(3), beta(3), gamma(1), delta(1), epsilon(1). CF(0) has three main subunits: a, b and c.</text>
</comment>
<comment type="subcellular location">
    <subcellularLocation>
        <location>Mitochondrion inner membrane</location>
        <topology>Multi-pass membrane protein</topology>
    </subcellularLocation>
</comment>
<comment type="RNA editing">
    <location>
        <position position="123" evidence="3 4 5"/>
    </location>
</comment>
<comment type="miscellaneous">
    <text>The atp6 gene is located on the border of one of the mitochondrial DNA repeats resulting in two identical copies of the mature protein with different propeptide extensions.</text>
</comment>
<comment type="similarity">
    <text evidence="6">Belongs to the ATPase A chain family.</text>
</comment>
<name>ATP62_ARATH</name>
<organism>
    <name type="scientific">Arabidopsis thaliana</name>
    <name type="common">Mouse-ear cress</name>
    <dbReference type="NCBI Taxonomy" id="3702"/>
    <lineage>
        <taxon>Eukaryota</taxon>
        <taxon>Viridiplantae</taxon>
        <taxon>Streptophyta</taxon>
        <taxon>Embryophyta</taxon>
        <taxon>Tracheophyta</taxon>
        <taxon>Spermatophyta</taxon>
        <taxon>Magnoliopsida</taxon>
        <taxon>eudicotyledons</taxon>
        <taxon>Gunneridae</taxon>
        <taxon>Pentapetalae</taxon>
        <taxon>rosids</taxon>
        <taxon>malvids</taxon>
        <taxon>Brassicales</taxon>
        <taxon>Brassicaceae</taxon>
        <taxon>Camelineae</taxon>
        <taxon>Arabidopsis</taxon>
    </lineage>
</organism>
<proteinExistence type="evidence at transcript level"/>
<feature type="propeptide" id="PRO_0000002604">
    <location>
        <begin position="1"/>
        <end position="97"/>
    </location>
</feature>
<feature type="chain" id="PRO_0000002605" description="ATP synthase subunit a-2">
    <location>
        <begin position="98"/>
        <end position="349"/>
    </location>
</feature>
<feature type="transmembrane region" description="Helical" evidence="2">
    <location>
        <begin position="118"/>
        <end position="138"/>
    </location>
</feature>
<feature type="transmembrane region" description="Helical" evidence="2">
    <location>
        <begin position="184"/>
        <end position="204"/>
    </location>
</feature>
<feature type="transmembrane region" description="Helical" evidence="2">
    <location>
        <begin position="213"/>
        <end position="233"/>
    </location>
</feature>
<feature type="transmembrane region" description="Helical" evidence="2">
    <location>
        <begin position="240"/>
        <end position="260"/>
    </location>
</feature>
<feature type="transmembrane region" description="Helical" evidence="2">
    <location>
        <begin position="280"/>
        <end position="300"/>
    </location>
</feature>
<feature type="transmembrane region" description="Helical" evidence="2">
    <location>
        <begin position="303"/>
        <end position="323"/>
    </location>
</feature>
<feature type="transmembrane region" description="Helical" evidence="2">
    <location>
        <begin position="326"/>
        <end position="346"/>
    </location>
</feature>
<accession>P92547</accession>
<accession>A0A2P2CLH6</accession>
<accession>Q1ZXW9</accession>
<sequence>MERLTRLNHFLVNMRWDFYEGVIQAGYIRNLQRELDHTPAELLGSKLDLIFFRESLNLSTYVNNWYMQNLGVPGPVNFIEKYHDACFSNYMKLMEIPSPLDQFEIVPLIPMHIGNFYFSFTNSSLFMLLTLSFFLLLIHFVTKKGGGNLVPNAWQSLVELLYDFVLNLVKEQIGGLSGNVKQMFFPCILVTFLFLLFCNLQGMIPYSFTVTSHFLITLALSFSIFIGITIVGFQRHGLHFFSFLLPAGVPLPLAPFLVLLELISYCFRALSLGIRLFANMMAGHSLVKILSGFAWTMLCMNDIFYFIGALGPLFIVLALTGLELGVAILQAYVFTILICIYLNDAINLH</sequence>
<reference key="1">
    <citation type="journal article" date="1996" name="DNA Res.">
        <title>Genomic recombination of the mitochondrial atp6 gene in Arabidopsis thaliana at the protein processing site creates two different presequences.</title>
        <authorList>
            <person name="Marienfeld J.R."/>
            <person name="Unseld M."/>
            <person name="Brandt P."/>
            <person name="Brennicke A."/>
        </authorList>
    </citation>
    <scope>NUCLEOTIDE SEQUENCE [GENOMIC DNA]</scope>
    <scope>RNA EDITING</scope>
    <source>
        <strain>cv. Columbia</strain>
    </source>
</reference>
<reference key="2">
    <citation type="journal article" date="1997" name="Nat. Genet.">
        <title>The mitochondrial genome of Arabidopsis thaliana contains 57 genes in 366,924 nucleotides.</title>
        <authorList>
            <person name="Unseld M."/>
            <person name="Marienfeld J.R."/>
            <person name="Brandt P."/>
            <person name="Brennicke A."/>
        </authorList>
    </citation>
    <scope>NUCLEOTIDE SEQUENCE [LARGE SCALE GENOMIC DNA]</scope>
    <source>
        <strain>cv. C24</strain>
    </source>
</reference>
<reference key="3">
    <citation type="journal article" date="2018" name="Plant Cell">
        <title>Correction of persistent errors in Arabidopsis reference mitochondrial genomes.</title>
        <authorList>
            <person name="Sloan D.B."/>
            <person name="Wu Z."/>
            <person name="Sharbrough J."/>
        </authorList>
    </citation>
    <scope>NUCLEOTIDE SEQUENCE [LARGE SCALE GENOMIC DNA]</scope>
    <scope>RNA EDITING</scope>
    <source>
        <strain>cv. Columbia</strain>
    </source>
</reference>
<reference key="4">
    <citation type="journal article" date="2017" name="Plant J.">
        <title>Araport11: a complete reannotation of the Arabidopsis thaliana reference genome.</title>
        <authorList>
            <person name="Cheng C.Y."/>
            <person name="Krishnakumar V."/>
            <person name="Chan A.P."/>
            <person name="Thibaud-Nissen F."/>
            <person name="Schobel S."/>
            <person name="Town C.D."/>
        </authorList>
    </citation>
    <scope>GENOME REANNOTATION (AT2G07699)</scope>
    <source>
        <strain>cv. Columbia</strain>
    </source>
</reference>
<reference key="5">
    <citation type="journal article" date="1999" name="Proc. Natl. Acad. Sci. U.S.A.">
        <title>RNA editing in Arabidopsis mitochondria effects 441 C to U changes in ORFs.</title>
        <authorList>
            <person name="Giege P."/>
            <person name="Brennicke A."/>
        </authorList>
    </citation>
    <scope>NUCLEOTIDE SEQUENCE [GENOMIC DNA]</scope>
    <scope>RNA EDITING</scope>
</reference>
<dbReference type="EMBL" id="Y08501">
    <property type="protein sequence ID" value="CAA69800.1"/>
    <property type="status" value="ALT_SEQ"/>
    <property type="molecule type" value="Genomic_DNA"/>
</dbReference>
<dbReference type="EMBL" id="BK010421">
    <property type="protein sequence ID" value="DAB41515.2"/>
    <property type="molecule type" value="Genomic_DNA"/>
</dbReference>
<dbReference type="EMBL" id="CP002685">
    <property type="status" value="NOT_ANNOTATED_CDS"/>
    <property type="molecule type" value="Genomic_DNA"/>
</dbReference>
<dbReference type="RefSeq" id="NP_085569.1">
    <property type="nucleotide sequence ID" value="NC_001284.2"/>
</dbReference>
<dbReference type="SMR" id="P92547"/>
<dbReference type="FunCoup" id="P92547">
    <property type="interactions" value="23"/>
</dbReference>
<dbReference type="STRING" id="3702.P92547"/>
<dbReference type="PaxDb" id="3702-ATMG01170.1"/>
<dbReference type="Araport" id="ATMG01170"/>
<dbReference type="TAIR" id="ATMG01170">
    <property type="gene designation" value="ATP6-2"/>
</dbReference>
<dbReference type="eggNOG" id="KOG4665">
    <property type="taxonomic scope" value="Eukaryota"/>
</dbReference>
<dbReference type="InParanoid" id="P92547"/>
<dbReference type="PRO" id="PR:P92547"/>
<dbReference type="Proteomes" id="UP000006548">
    <property type="component" value="Chromosome 2"/>
</dbReference>
<dbReference type="Proteomes" id="UP000006548">
    <property type="component" value="Mitochondrion MT"/>
</dbReference>
<dbReference type="ExpressionAtlas" id="P92547">
    <property type="expression patterns" value="baseline and differential"/>
</dbReference>
<dbReference type="GO" id="GO:0005743">
    <property type="term" value="C:mitochondrial inner membrane"/>
    <property type="evidence" value="ECO:0007669"/>
    <property type="project" value="UniProtKB-SubCell"/>
</dbReference>
<dbReference type="GO" id="GO:0045259">
    <property type="term" value="C:proton-transporting ATP synthase complex"/>
    <property type="evidence" value="ECO:0000318"/>
    <property type="project" value="GO_Central"/>
</dbReference>
<dbReference type="GO" id="GO:0015078">
    <property type="term" value="F:proton transmembrane transporter activity"/>
    <property type="evidence" value="ECO:0007669"/>
    <property type="project" value="InterPro"/>
</dbReference>
<dbReference type="GO" id="GO:0015986">
    <property type="term" value="P:proton motive force-driven ATP synthesis"/>
    <property type="evidence" value="ECO:0000318"/>
    <property type="project" value="GO_Central"/>
</dbReference>
<dbReference type="CDD" id="cd00310">
    <property type="entry name" value="ATP-synt_Fo_a_6"/>
    <property type="match status" value="1"/>
</dbReference>
<dbReference type="FunFam" id="1.20.120.220:FF:000003">
    <property type="entry name" value="ATP synthase subunit a"/>
    <property type="match status" value="1"/>
</dbReference>
<dbReference type="Gene3D" id="1.20.120.220">
    <property type="entry name" value="ATP synthase, F0 complex, subunit A"/>
    <property type="match status" value="1"/>
</dbReference>
<dbReference type="HAMAP" id="MF_01393">
    <property type="entry name" value="ATP_synth_a_bact"/>
    <property type="match status" value="1"/>
</dbReference>
<dbReference type="InterPro" id="IPR000568">
    <property type="entry name" value="ATP_synth_F0_asu"/>
</dbReference>
<dbReference type="InterPro" id="IPR023011">
    <property type="entry name" value="ATP_synth_F0_asu_AS"/>
</dbReference>
<dbReference type="InterPro" id="IPR045083">
    <property type="entry name" value="ATP_synth_F0_asu_bact/mt"/>
</dbReference>
<dbReference type="InterPro" id="IPR035908">
    <property type="entry name" value="F0_ATP_A_sf"/>
</dbReference>
<dbReference type="NCBIfam" id="TIGR01131">
    <property type="entry name" value="ATP_synt_6_or_A"/>
    <property type="match status" value="1"/>
</dbReference>
<dbReference type="NCBIfam" id="NF004482">
    <property type="entry name" value="PRK05815.2-4"/>
    <property type="match status" value="1"/>
</dbReference>
<dbReference type="PANTHER" id="PTHR11410">
    <property type="entry name" value="ATP SYNTHASE SUBUNIT A"/>
    <property type="match status" value="1"/>
</dbReference>
<dbReference type="PANTHER" id="PTHR11410:SF0">
    <property type="entry name" value="ATP SYNTHASE SUBUNIT A"/>
    <property type="match status" value="1"/>
</dbReference>
<dbReference type="Pfam" id="PF00119">
    <property type="entry name" value="ATP-synt_A"/>
    <property type="match status" value="1"/>
</dbReference>
<dbReference type="PRINTS" id="PR00123">
    <property type="entry name" value="ATPASEA"/>
</dbReference>
<dbReference type="SUPFAM" id="SSF81336">
    <property type="entry name" value="F1F0 ATP synthase subunit A"/>
    <property type="match status" value="1"/>
</dbReference>
<dbReference type="PROSITE" id="PS00449">
    <property type="entry name" value="ATPASE_A"/>
    <property type="match status" value="1"/>
</dbReference>
<gene>
    <name type="primary">ATP6-2</name>
    <name type="ordered locus">AtMg01170</name>
</gene>
<geneLocation type="mitochondrion"/>